<evidence type="ECO:0000255" key="1">
    <source>
        <dbReference type="HAMAP-Rule" id="MF_01408"/>
    </source>
</evidence>
<evidence type="ECO:0000255" key="2">
    <source>
        <dbReference type="PROSITE-ProRule" id="PRU00661"/>
    </source>
</evidence>
<evidence type="ECO:0000269" key="3">
    <source>
    </source>
</evidence>
<evidence type="ECO:0000269" key="4">
    <source>
    </source>
</evidence>
<evidence type="ECO:0000269" key="5">
    <source>
    </source>
</evidence>
<evidence type="ECO:0000269" key="6">
    <source>
    </source>
</evidence>
<evidence type="ECO:0000269" key="7">
    <source>
    </source>
</evidence>
<evidence type="ECO:0000269" key="8">
    <source>
    </source>
</evidence>
<evidence type="ECO:0000269" key="9">
    <source>
    </source>
</evidence>
<evidence type="ECO:0000269" key="10">
    <source>
    </source>
</evidence>
<evidence type="ECO:0000303" key="11">
    <source>
    </source>
</evidence>
<evidence type="ECO:0000303" key="12">
    <source>
    </source>
</evidence>
<evidence type="ECO:0000303" key="13">
    <source>
    </source>
</evidence>
<evidence type="ECO:0000303" key="14">
    <source>
    </source>
</evidence>
<evidence type="ECO:0000303" key="15">
    <source>
    </source>
</evidence>
<evidence type="ECO:0000305" key="16">
    <source>
    </source>
</evidence>
<evidence type="ECO:0007744" key="17">
    <source>
        <dbReference type="PDB" id="1KQ4"/>
    </source>
</evidence>
<evidence type="ECO:0007744" key="18">
    <source>
        <dbReference type="PDB" id="1O24"/>
    </source>
</evidence>
<evidence type="ECO:0007744" key="19">
    <source>
        <dbReference type="PDB" id="1O25"/>
    </source>
</evidence>
<evidence type="ECO:0007744" key="20">
    <source>
        <dbReference type="PDB" id="1O26"/>
    </source>
</evidence>
<evidence type="ECO:0007744" key="21">
    <source>
        <dbReference type="PDB" id="1O27"/>
    </source>
</evidence>
<evidence type="ECO:0007744" key="22">
    <source>
        <dbReference type="PDB" id="1O28"/>
    </source>
</evidence>
<evidence type="ECO:0007744" key="23">
    <source>
        <dbReference type="PDB" id="1O29"/>
    </source>
</evidence>
<evidence type="ECO:0007744" key="24">
    <source>
        <dbReference type="PDB" id="1O2A"/>
    </source>
</evidence>
<evidence type="ECO:0007744" key="25">
    <source>
        <dbReference type="PDB" id="1O2B"/>
    </source>
</evidence>
<evidence type="ECO:0007744" key="26">
    <source>
        <dbReference type="PDB" id="3G4A"/>
    </source>
</evidence>
<evidence type="ECO:0007744" key="27">
    <source>
        <dbReference type="PDB" id="3G4C"/>
    </source>
</evidence>
<evidence type="ECO:0007744" key="28">
    <source>
        <dbReference type="PDB" id="3N0B"/>
    </source>
</evidence>
<evidence type="ECO:0007744" key="29">
    <source>
        <dbReference type="PDB" id="3N0C"/>
    </source>
</evidence>
<evidence type="ECO:0007744" key="30">
    <source>
        <dbReference type="PDB" id="4GT9"/>
    </source>
</evidence>
<evidence type="ECO:0007744" key="31">
    <source>
        <dbReference type="PDB" id="4GTA"/>
    </source>
</evidence>
<evidence type="ECO:0007744" key="32">
    <source>
        <dbReference type="PDB" id="4GTB"/>
    </source>
</evidence>
<evidence type="ECO:0007744" key="33">
    <source>
        <dbReference type="PDB" id="4GTC"/>
    </source>
</evidence>
<evidence type="ECO:0007744" key="34">
    <source>
        <dbReference type="PDB" id="4GTD"/>
    </source>
</evidence>
<evidence type="ECO:0007744" key="35">
    <source>
        <dbReference type="PDB" id="4GTE"/>
    </source>
</evidence>
<evidence type="ECO:0007744" key="36">
    <source>
        <dbReference type="PDB" id="4GTF"/>
    </source>
</evidence>
<evidence type="ECO:0007744" key="37">
    <source>
        <dbReference type="PDB" id="4GTL"/>
    </source>
</evidence>
<evidence type="ECO:0007744" key="38">
    <source>
        <dbReference type="PDB" id="4KAR"/>
    </source>
</evidence>
<evidence type="ECO:0007744" key="39">
    <source>
        <dbReference type="PDB" id="4KAS"/>
    </source>
</evidence>
<evidence type="ECO:0007744" key="40">
    <source>
        <dbReference type="PDB" id="4KAT"/>
    </source>
</evidence>
<evidence type="ECO:0007744" key="41">
    <source>
        <dbReference type="PDB" id="5IOQ"/>
    </source>
</evidence>
<evidence type="ECO:0007744" key="42">
    <source>
        <dbReference type="PDB" id="5IOR"/>
    </source>
</evidence>
<evidence type="ECO:0007744" key="43">
    <source>
        <dbReference type="PDB" id="5IOS"/>
    </source>
</evidence>
<evidence type="ECO:0007744" key="44">
    <source>
        <dbReference type="PDB" id="5IOT"/>
    </source>
</evidence>
<evidence type="ECO:0007744" key="45">
    <source>
        <dbReference type="PDB" id="7NDW"/>
    </source>
</evidence>
<evidence type="ECO:0007744" key="46">
    <source>
        <dbReference type="PDB" id="7NDZ"/>
    </source>
</evidence>
<evidence type="ECO:0007829" key="47">
    <source>
        <dbReference type="PDB" id="1O26"/>
    </source>
</evidence>
<evidence type="ECO:0007829" key="48">
    <source>
        <dbReference type="PDB" id="4GT9"/>
    </source>
</evidence>
<sequence>MKIDILDKGFVELVDVMGNDLSAVRAARVSFDMGLKDEERDRHLIEYLMKHGHETPFEHIVFTFHVKAPIFVARQWFRHRIASYNELSGRYSKLSYEFYIPSPERLEGYKTTIPPERVTEKISEIVDKAYRTYLELIESGVPREVARIVLPLNLYTRFFWTVNARSLMNFLNLRADSHAQWEIQQYALAIARIFKEKCPWTFEAFLKYAYKGDILKEVQV</sequence>
<name>THYX_THEMA</name>
<proteinExistence type="evidence at protein level"/>
<organism>
    <name type="scientific">Thermotoga maritima (strain ATCC 43589 / DSM 3109 / JCM 10099 / NBRC 100826 / MSB8)</name>
    <dbReference type="NCBI Taxonomy" id="243274"/>
    <lineage>
        <taxon>Bacteria</taxon>
        <taxon>Thermotogati</taxon>
        <taxon>Thermotogota</taxon>
        <taxon>Thermotogae</taxon>
        <taxon>Thermotogales</taxon>
        <taxon>Thermotogaceae</taxon>
        <taxon>Thermotoga</taxon>
    </lineage>
</organism>
<comment type="function">
    <text evidence="4 5 10">Catalyzes the reductive methylation of 2'-deoxyuridine-5'-monophosphate (dUMP or deoxyuridylate) to 2'-deoxythymidine-5'-monophosphate (dTMP or deoxythymidylate) while utilizing 5,10-methylenetetrahydrofolate (mTHF) as the methylene donor, and NAD(P)H and FADH(2) as the reductant. This reaction is a critical step in DNA biosynthesis (PubMed:12791256, PubMed:19370033). Can also use formaldehyde instead of mTHF as a direct methylene donor for dTMP synthesis. However, the tighter binding of ThyX to mTHF (KD of 4 uM) compared to formaldehyde (KD of 20 mM) confirms that methylene tetrahydrofolate acts as the biological carbon donor for ThyX, serving as a formaldehyde carrier/transporter and thus avoiding genotoxic effects (PubMed:34315871).</text>
</comment>
<comment type="catalytic activity">
    <reaction evidence="4 5">
        <text>dUMP + (6R)-5,10-methylene-5,6,7,8-tetrahydrofolate + NADPH + H(+) = dTMP + (6S)-5,6,7,8-tetrahydrofolate + NADP(+)</text>
        <dbReference type="Rhea" id="RHEA:29043"/>
        <dbReference type="ChEBI" id="CHEBI:15378"/>
        <dbReference type="ChEBI" id="CHEBI:15636"/>
        <dbReference type="ChEBI" id="CHEBI:57453"/>
        <dbReference type="ChEBI" id="CHEBI:57783"/>
        <dbReference type="ChEBI" id="CHEBI:58349"/>
        <dbReference type="ChEBI" id="CHEBI:63528"/>
        <dbReference type="ChEBI" id="CHEBI:246422"/>
        <dbReference type="EC" id="2.1.1.148"/>
    </reaction>
</comment>
<comment type="catalytic activity">
    <reaction evidence="10">
        <text>dUMP + formaldehyde + NADPH + H(+) = dTMP + NADP(+) + H2O</text>
        <dbReference type="Rhea" id="RHEA:68268"/>
        <dbReference type="ChEBI" id="CHEBI:15377"/>
        <dbReference type="ChEBI" id="CHEBI:15378"/>
        <dbReference type="ChEBI" id="CHEBI:16842"/>
        <dbReference type="ChEBI" id="CHEBI:57783"/>
        <dbReference type="ChEBI" id="CHEBI:58349"/>
        <dbReference type="ChEBI" id="CHEBI:63528"/>
        <dbReference type="ChEBI" id="CHEBI:246422"/>
    </reaction>
</comment>
<comment type="cofactor">
    <cofactor evidence="4 16">
        <name>FAD</name>
        <dbReference type="ChEBI" id="CHEBI:57692"/>
    </cofactor>
    <text evidence="3 4">Binds 4 FAD per tetramer. Each FAD binding site is formed by three monomers.</text>
</comment>
<comment type="biophysicochemical properties">
    <kinetics>
        <KM evidence="5">30 uM for dUMP (at 65 degrees Celsius)</KM>
        <text evidence="5">kcat is 1.2 sec(-1) (at 65 degrees Celsius).</text>
    </kinetics>
</comment>
<comment type="pathway">
    <text evidence="1">Pyrimidine metabolism; dTTP biosynthesis.</text>
</comment>
<comment type="subunit">
    <text evidence="3 4 8">Homotetramer.</text>
</comment>
<comment type="miscellaneous">
    <text evidence="7 9 10">Reaction mechanism involved a direct methylene transfer from mTHF to dUMP (PubMed:23019356). FDTS ionizes N3 of dUMP using the active-site Arg-174, providing a new mechanism for dUMP activation. The phosphate of dUMP is crucial for flavin oxidation, suggesting that it acts as the base that deprotonates C5 of the dUMP-methylene adduct (PubMed:27214228). A later study showed that FAD is first reduced by NADPH. Then, the reduced flavin, FADH(-), reacts with mTHF to form a carbinolamine flavin, which acts as the genuine methylene donor. The flavin carbinolamine can be obtained directly via a CH2O-shunt reaction consisting of a reaction of FADH(-) with free CH2O. Methylene transfer from FAD to dUMP is initiated by an SN2 reaction of activated dUMP and the flavin carbinolamine, leading to water elimination and formation of a transient FAD-CH2-dUMP adduct (PubMed:34315871).</text>
</comment>
<comment type="similarity">
    <text evidence="1">Belongs to the thymidylate synthase ThyX family.</text>
</comment>
<dbReference type="EC" id="2.1.1.148" evidence="4 5"/>
<dbReference type="EMBL" id="AE000512">
    <property type="protein sequence ID" value="AAD35532.1"/>
    <property type="molecule type" value="Genomic_DNA"/>
</dbReference>
<dbReference type="PIR" id="B72375">
    <property type="entry name" value="B72375"/>
</dbReference>
<dbReference type="RefSeq" id="NP_228259.1">
    <property type="nucleotide sequence ID" value="NC_000853.1"/>
</dbReference>
<dbReference type="RefSeq" id="WP_004081517.1">
    <property type="nucleotide sequence ID" value="NZ_CP011107.1"/>
</dbReference>
<dbReference type="PDB" id="1KQ4">
    <property type="method" value="X-ray"/>
    <property type="resolution" value="2.25 A"/>
    <property type="chains" value="A/B/C/D=1-220"/>
</dbReference>
<dbReference type="PDB" id="1O24">
    <property type="method" value="X-ray"/>
    <property type="resolution" value="2.00 A"/>
    <property type="chains" value="A/B/C/D=1-220"/>
</dbReference>
<dbReference type="PDB" id="1O25">
    <property type="method" value="X-ray"/>
    <property type="resolution" value="2.40 A"/>
    <property type="chains" value="A/B/C/D=1-220"/>
</dbReference>
<dbReference type="PDB" id="1O26">
    <property type="method" value="X-ray"/>
    <property type="resolution" value="1.60 A"/>
    <property type="chains" value="A/B/C/D=1-220"/>
</dbReference>
<dbReference type="PDB" id="1O27">
    <property type="method" value="X-ray"/>
    <property type="resolution" value="2.30 A"/>
    <property type="chains" value="A/B/C/D=1-220"/>
</dbReference>
<dbReference type="PDB" id="1O28">
    <property type="method" value="X-ray"/>
    <property type="resolution" value="2.10 A"/>
    <property type="chains" value="A/B/C/D=1-220"/>
</dbReference>
<dbReference type="PDB" id="1O29">
    <property type="method" value="X-ray"/>
    <property type="resolution" value="2.00 A"/>
    <property type="chains" value="A/B/C/D=1-220"/>
</dbReference>
<dbReference type="PDB" id="1O2A">
    <property type="method" value="X-ray"/>
    <property type="resolution" value="1.80 A"/>
    <property type="chains" value="A/B/C/D=1-220"/>
</dbReference>
<dbReference type="PDB" id="1O2B">
    <property type="method" value="X-ray"/>
    <property type="resolution" value="2.45 A"/>
    <property type="chains" value="A/B/C/D=1-220"/>
</dbReference>
<dbReference type="PDB" id="3G4A">
    <property type="method" value="X-ray"/>
    <property type="resolution" value="1.95 A"/>
    <property type="chains" value="A/B/C/D=1-220"/>
</dbReference>
<dbReference type="PDB" id="3G4C">
    <property type="method" value="X-ray"/>
    <property type="resolution" value="2.05 A"/>
    <property type="chains" value="A/B/C/D=1-220"/>
</dbReference>
<dbReference type="PDB" id="3N0B">
    <property type="method" value="X-ray"/>
    <property type="resolution" value="2.30 A"/>
    <property type="chains" value="A/B/C/D=1-220"/>
</dbReference>
<dbReference type="PDB" id="3N0C">
    <property type="method" value="X-ray"/>
    <property type="resolution" value="2.30 A"/>
    <property type="chains" value="A/B/C/D=1-220"/>
</dbReference>
<dbReference type="PDB" id="4GT9">
    <property type="method" value="X-ray"/>
    <property type="resolution" value="1.39 A"/>
    <property type="chains" value="A=1-220"/>
</dbReference>
<dbReference type="PDB" id="4GTA">
    <property type="method" value="X-ray"/>
    <property type="resolution" value="1.50 A"/>
    <property type="chains" value="A=1-220"/>
</dbReference>
<dbReference type="PDB" id="4GTB">
    <property type="method" value="X-ray"/>
    <property type="resolution" value="1.70 A"/>
    <property type="chains" value="A=1-220"/>
</dbReference>
<dbReference type="PDB" id="4GTC">
    <property type="method" value="X-ray"/>
    <property type="resolution" value="1.97 A"/>
    <property type="chains" value="A/B/C/D=1-220"/>
</dbReference>
<dbReference type="PDB" id="4GTD">
    <property type="method" value="X-ray"/>
    <property type="resolution" value="1.76 A"/>
    <property type="chains" value="A/B/C/D=1-220"/>
</dbReference>
<dbReference type="PDB" id="4GTE">
    <property type="method" value="X-ray"/>
    <property type="resolution" value="1.89 A"/>
    <property type="chains" value="A/B/C/D=1-220"/>
</dbReference>
<dbReference type="PDB" id="4GTF">
    <property type="method" value="X-ray"/>
    <property type="resolution" value="1.77 A"/>
    <property type="chains" value="A=1-220"/>
</dbReference>
<dbReference type="PDB" id="4GTL">
    <property type="method" value="X-ray"/>
    <property type="resolution" value="2.17 A"/>
    <property type="chains" value="A/B/C/D=1-220"/>
</dbReference>
<dbReference type="PDB" id="4KAR">
    <property type="method" value="X-ray"/>
    <property type="resolution" value="2.03 A"/>
    <property type="chains" value="A/B/C/D=1-220"/>
</dbReference>
<dbReference type="PDB" id="4KAS">
    <property type="method" value="X-ray"/>
    <property type="resolution" value="1.85 A"/>
    <property type="chains" value="A/B/C/D=1-220"/>
</dbReference>
<dbReference type="PDB" id="4KAT">
    <property type="method" value="X-ray"/>
    <property type="resolution" value="2.14 A"/>
    <property type="chains" value="A/B/C/D=1-220"/>
</dbReference>
<dbReference type="PDB" id="5CHP">
    <property type="method" value="X-ray"/>
    <property type="resolution" value="1.70 A"/>
    <property type="chains" value="A=1-220"/>
</dbReference>
<dbReference type="PDB" id="5IOQ">
    <property type="method" value="X-ray"/>
    <property type="resolution" value="1.93 A"/>
    <property type="chains" value="A/B/C/D=1-220"/>
</dbReference>
<dbReference type="PDB" id="5IOR">
    <property type="method" value="X-ray"/>
    <property type="resolution" value="1.95 A"/>
    <property type="chains" value="A=1-220"/>
</dbReference>
<dbReference type="PDB" id="5IOS">
    <property type="method" value="X-ray"/>
    <property type="resolution" value="1.90 A"/>
    <property type="chains" value="A/B/C/D=1-220"/>
</dbReference>
<dbReference type="PDB" id="5IOT">
    <property type="method" value="X-ray"/>
    <property type="resolution" value="2.00 A"/>
    <property type="chains" value="A/B/C/D=1-220"/>
</dbReference>
<dbReference type="PDB" id="5JFE">
    <property type="method" value="X-ray"/>
    <property type="resolution" value="2.03 A"/>
    <property type="chains" value="A=1-220"/>
</dbReference>
<dbReference type="PDB" id="7NDW">
    <property type="method" value="X-ray"/>
    <property type="resolution" value="2.00 A"/>
    <property type="chains" value="A/B/C/D=1-220"/>
</dbReference>
<dbReference type="PDB" id="7NDZ">
    <property type="method" value="X-ray"/>
    <property type="resolution" value="2.70 A"/>
    <property type="chains" value="A/B/C/D=1-220"/>
</dbReference>
<dbReference type="PDB" id="8REN">
    <property type="method" value="X-ray"/>
    <property type="resolution" value="2.14 A"/>
    <property type="chains" value="A/B/C/D=1-220"/>
</dbReference>
<dbReference type="PDB" id="8REO">
    <property type="method" value="X-ray"/>
    <property type="resolution" value="2.03 A"/>
    <property type="chains" value="A/B/C/D=1-220"/>
</dbReference>
<dbReference type="PDB" id="8REP">
    <property type="method" value="X-ray"/>
    <property type="resolution" value="2.20 A"/>
    <property type="chains" value="A/B/C/D=1-220"/>
</dbReference>
<dbReference type="PDB" id="8REQ">
    <property type="method" value="X-ray"/>
    <property type="resolution" value="1.94 A"/>
    <property type="chains" value="A/B/C/D=1-220"/>
</dbReference>
<dbReference type="PDBsum" id="1KQ4"/>
<dbReference type="PDBsum" id="1O24"/>
<dbReference type="PDBsum" id="1O25"/>
<dbReference type="PDBsum" id="1O26"/>
<dbReference type="PDBsum" id="1O27"/>
<dbReference type="PDBsum" id="1O28"/>
<dbReference type="PDBsum" id="1O29"/>
<dbReference type="PDBsum" id="1O2A"/>
<dbReference type="PDBsum" id="1O2B"/>
<dbReference type="PDBsum" id="3G4A"/>
<dbReference type="PDBsum" id="3G4C"/>
<dbReference type="PDBsum" id="3N0B"/>
<dbReference type="PDBsum" id="3N0C"/>
<dbReference type="PDBsum" id="4GT9"/>
<dbReference type="PDBsum" id="4GTA"/>
<dbReference type="PDBsum" id="4GTB"/>
<dbReference type="PDBsum" id="4GTC"/>
<dbReference type="PDBsum" id="4GTD"/>
<dbReference type="PDBsum" id="4GTE"/>
<dbReference type="PDBsum" id="4GTF"/>
<dbReference type="PDBsum" id="4GTL"/>
<dbReference type="PDBsum" id="4KAR"/>
<dbReference type="PDBsum" id="4KAS"/>
<dbReference type="PDBsum" id="4KAT"/>
<dbReference type="PDBsum" id="5CHP"/>
<dbReference type="PDBsum" id="5IOQ"/>
<dbReference type="PDBsum" id="5IOR"/>
<dbReference type="PDBsum" id="5IOS"/>
<dbReference type="PDBsum" id="5IOT"/>
<dbReference type="PDBsum" id="5JFE"/>
<dbReference type="PDBsum" id="7NDW"/>
<dbReference type="PDBsum" id="7NDZ"/>
<dbReference type="PDBsum" id="8REN"/>
<dbReference type="PDBsum" id="8REO"/>
<dbReference type="PDBsum" id="8REP"/>
<dbReference type="PDBsum" id="8REQ"/>
<dbReference type="SMR" id="Q9WYT0"/>
<dbReference type="DIP" id="DIP-60076N"/>
<dbReference type="STRING" id="243274.TM_0449"/>
<dbReference type="DrugBank" id="DB01903">
    <property type="generic name" value="5-Bromo-2'-deoxyuridine 5'-(dihydrogen phosphate)"/>
</dbReference>
<dbReference type="DrugBank" id="DB03761">
    <property type="generic name" value="5-fluoro-2'-deoxyuridine-5'-monophosphate"/>
</dbReference>
<dbReference type="DrugBank" id="DB03800">
    <property type="generic name" value="Deoxyuridine monophosphate"/>
</dbReference>
<dbReference type="DrugBank" id="DB03147">
    <property type="generic name" value="Flavin adenine dinucleotide"/>
</dbReference>
<dbReference type="PaxDb" id="243274-THEMA_02480"/>
<dbReference type="EnsemblBacteria" id="AAD35532">
    <property type="protein sequence ID" value="AAD35532"/>
    <property type="gene ID" value="TM_0449"/>
</dbReference>
<dbReference type="KEGG" id="tma:TM0449"/>
<dbReference type="KEGG" id="tmi:THEMA_02480"/>
<dbReference type="KEGG" id="tmm:Tmari_0446"/>
<dbReference type="KEGG" id="tmw:THMA_0455"/>
<dbReference type="eggNOG" id="COG1351">
    <property type="taxonomic scope" value="Bacteria"/>
</dbReference>
<dbReference type="InParanoid" id="Q9WYT0"/>
<dbReference type="OrthoDB" id="9774464at2"/>
<dbReference type="BioCyc" id="MetaCyc:MONOMER-15758"/>
<dbReference type="BRENDA" id="2.1.1.148">
    <property type="organism ID" value="6331"/>
</dbReference>
<dbReference type="SABIO-RK" id="Q9WYT0"/>
<dbReference type="UniPathway" id="UPA00575"/>
<dbReference type="EvolutionaryTrace" id="Q9WYT0"/>
<dbReference type="Proteomes" id="UP000008183">
    <property type="component" value="Chromosome"/>
</dbReference>
<dbReference type="GO" id="GO:0050660">
    <property type="term" value="F:flavin adenine dinucleotide binding"/>
    <property type="evidence" value="ECO:0000318"/>
    <property type="project" value="GO_Central"/>
</dbReference>
<dbReference type="GO" id="GO:0070402">
    <property type="term" value="F:NADPH binding"/>
    <property type="evidence" value="ECO:0000318"/>
    <property type="project" value="GO_Central"/>
</dbReference>
<dbReference type="GO" id="GO:0050797">
    <property type="term" value="F:thymidylate synthase (FAD) activity"/>
    <property type="evidence" value="ECO:0000318"/>
    <property type="project" value="GO_Central"/>
</dbReference>
<dbReference type="GO" id="GO:0004799">
    <property type="term" value="F:thymidylate synthase activity"/>
    <property type="evidence" value="ECO:0000318"/>
    <property type="project" value="GO_Central"/>
</dbReference>
<dbReference type="GO" id="GO:0006231">
    <property type="term" value="P:dTMP biosynthetic process"/>
    <property type="evidence" value="ECO:0000318"/>
    <property type="project" value="GO_Central"/>
</dbReference>
<dbReference type="GO" id="GO:0006235">
    <property type="term" value="P:dTTP biosynthetic process"/>
    <property type="evidence" value="ECO:0007669"/>
    <property type="project" value="UniProtKB-UniRule"/>
</dbReference>
<dbReference type="GO" id="GO:0032259">
    <property type="term" value="P:methylation"/>
    <property type="evidence" value="ECO:0007669"/>
    <property type="project" value="UniProtKB-KW"/>
</dbReference>
<dbReference type="CDD" id="cd20175">
    <property type="entry name" value="ThyX"/>
    <property type="match status" value="1"/>
</dbReference>
<dbReference type="FunFam" id="3.30.1360.170:FF:000008">
    <property type="entry name" value="Flavin-dependent thymidylate synthase"/>
    <property type="match status" value="1"/>
</dbReference>
<dbReference type="Gene3D" id="3.30.1360.170">
    <property type="match status" value="1"/>
</dbReference>
<dbReference type="HAMAP" id="MF_01408">
    <property type="entry name" value="ThyX"/>
    <property type="match status" value="1"/>
</dbReference>
<dbReference type="InterPro" id="IPR003669">
    <property type="entry name" value="Thymidylate_synthase_ThyX"/>
</dbReference>
<dbReference type="InterPro" id="IPR036098">
    <property type="entry name" value="Thymidylate_synthase_ThyX_sf"/>
</dbReference>
<dbReference type="NCBIfam" id="TIGR02170">
    <property type="entry name" value="thyX"/>
    <property type="match status" value="1"/>
</dbReference>
<dbReference type="PANTHER" id="PTHR34934">
    <property type="entry name" value="FLAVIN-DEPENDENT THYMIDYLATE SYNTHASE"/>
    <property type="match status" value="1"/>
</dbReference>
<dbReference type="PANTHER" id="PTHR34934:SF1">
    <property type="entry name" value="FLAVIN-DEPENDENT THYMIDYLATE SYNTHASE"/>
    <property type="match status" value="1"/>
</dbReference>
<dbReference type="Pfam" id="PF02511">
    <property type="entry name" value="Thy1"/>
    <property type="match status" value="1"/>
</dbReference>
<dbReference type="SUPFAM" id="SSF69796">
    <property type="entry name" value="Thymidylate synthase-complementing protein Thy1"/>
    <property type="match status" value="1"/>
</dbReference>
<dbReference type="PROSITE" id="PS51331">
    <property type="entry name" value="THYX"/>
    <property type="match status" value="1"/>
</dbReference>
<gene>
    <name evidence="12" type="primary">thyX</name>
    <name evidence="11" type="synonym">thy1</name>
    <name type="ordered locus">TM_0449</name>
</gene>
<feature type="chain" id="PRO_0000175579" description="Flavin-dependent thymidylate synthase">
    <location>
        <begin position="1"/>
        <end position="220"/>
    </location>
</feature>
<feature type="domain" description="ThyX" evidence="2">
    <location>
        <begin position="1"/>
        <end position="208"/>
    </location>
</feature>
<feature type="short sequence motif" description="ThyX motif" evidence="1">
    <location>
        <begin position="78"/>
        <end position="88"/>
    </location>
</feature>
<feature type="active site" description="Involved in ionization of N3 of dUMP, leading to its activation" evidence="9">
    <location>
        <position position="174"/>
    </location>
</feature>
<feature type="binding site" evidence="4 5 6 7 8 9 10 20 26 28 34 39 45">
    <location>
        <position position="55"/>
    </location>
    <ligand>
        <name>FAD</name>
        <dbReference type="ChEBI" id="CHEBI:57692"/>
        <note>ligand shared between neighboring subunits</note>
    </ligand>
</feature>
<feature type="binding site" evidence="4 5 6 7 8 9 20 26 28 30 39">
    <location>
        <begin position="75"/>
        <end position="78"/>
    </location>
    <ligand>
        <name>dUMP</name>
        <dbReference type="ChEBI" id="CHEBI:246422"/>
        <note>ligand shared between dimeric partners</note>
    </ligand>
</feature>
<feature type="binding site" evidence="3 4 5 6 7 8 9 10 17 20 26 28 34 39 45">
    <location>
        <begin position="78"/>
        <end position="81"/>
    </location>
    <ligand>
        <name>FAD</name>
        <dbReference type="ChEBI" id="CHEBI:57692"/>
        <note>ligand shared between neighboring subunits</note>
    </ligand>
</feature>
<feature type="binding site" description="in other chain" evidence="4 5 6 7 8 9 20 26 28 30 39">
    <location>
        <begin position="86"/>
        <end position="90"/>
    </location>
    <ligand>
        <name>dUMP</name>
        <dbReference type="ChEBI" id="CHEBI:246422"/>
        <note>ligand shared between dimeric partners</note>
    </ligand>
</feature>
<feature type="binding site" evidence="3 4 5 6 7 8 9 10 17 20 26 28 34 39 45">
    <location>
        <position position="86"/>
    </location>
    <ligand>
        <name>FAD</name>
        <dbReference type="ChEBI" id="CHEBI:57692"/>
        <note>ligand shared between neighboring subunits</note>
    </ligand>
</feature>
<feature type="binding site" description="in other chain" evidence="4 5 6 7 8 9 20 26 28 30 39">
    <location>
        <position position="147"/>
    </location>
    <ligand>
        <name>dUMP</name>
        <dbReference type="ChEBI" id="CHEBI:246422"/>
        <note>ligand shared between dimeric partners</note>
    </ligand>
</feature>
<feature type="binding site" evidence="3 4 5 6 7 8 9 10 17 20 26 28 34 39 45">
    <location>
        <begin position="163"/>
        <end position="165"/>
    </location>
    <ligand>
        <name>FAD</name>
        <dbReference type="ChEBI" id="CHEBI:57692"/>
        <note>ligand shared between neighboring subunits</note>
    </ligand>
</feature>
<feature type="binding site" evidence="3 4 5 6 7 8 9 10 17 20 26 28 34 39 45">
    <location>
        <position position="169"/>
    </location>
    <ligand>
        <name>FAD</name>
        <dbReference type="ChEBI" id="CHEBI:57692"/>
        <note>ligand shared between neighboring subunits</note>
    </ligand>
</feature>
<feature type="binding site" evidence="4 5 6 7 8 9 20 26 28 30 39">
    <location>
        <position position="174"/>
    </location>
    <ligand>
        <name>dUMP</name>
        <dbReference type="ChEBI" id="CHEBI:246422"/>
        <note>ligand shared between dimeric partners</note>
    </ligand>
</feature>
<feature type="mutagenesis site" description="Shows 1.39% of wild-type activity." evidence="7">
    <original>H</original>
    <variation>A</variation>
    <location>
        <position position="53"/>
    </location>
</feature>
<feature type="mutagenesis site" description="Still catalytically active although shows a large decrease in activity." evidence="5">
    <original>S</original>
    <variation>A</variation>
    <variation>C</variation>
    <location>
        <position position="88"/>
    </location>
</feature>
<feature type="mutagenesis site" description="Binds dUMP 670-fold weaker than wild-type." evidence="9">
    <original>R</original>
    <variation>A</variation>
    <location>
        <position position="90"/>
    </location>
</feature>
<feature type="mutagenesis site" description="Shows 0.113% of wild-type activity." evidence="7">
    <original>E</original>
    <variation>A</variation>
    <location>
        <position position="144"/>
    </location>
</feature>
<feature type="mutagenesis site" description="Shows 0.016% of wild-type activity." evidence="7">
    <original>E</original>
    <variation>R</variation>
    <location>
        <position position="144"/>
    </location>
</feature>
<feature type="mutagenesis site" description="Still catalytically active although only shows 0.0008% of wild-type activity. Binds dUMP 7300-fold weaker than wild-type." evidence="7 9">
    <original>R</original>
    <variation>A</variation>
    <location>
        <position position="174"/>
    </location>
</feature>
<feature type="mutagenesis site" description="Loss of catalytic activity." evidence="7">
    <original>R</original>
    <variation>K</variation>
    <location>
        <position position="174"/>
    </location>
</feature>
<feature type="strand" evidence="48">
    <location>
        <begin position="2"/>
        <end position="5"/>
    </location>
</feature>
<feature type="turn" evidence="48">
    <location>
        <begin position="6"/>
        <end position="8"/>
    </location>
</feature>
<feature type="strand" evidence="48">
    <location>
        <begin position="9"/>
        <end position="17"/>
    </location>
</feature>
<feature type="helix" evidence="48">
    <location>
        <begin position="20"/>
        <end position="28"/>
    </location>
</feature>
<feature type="helix" evidence="47">
    <location>
        <begin position="29"/>
        <end position="31"/>
    </location>
</feature>
<feature type="helix" evidence="48">
    <location>
        <begin position="39"/>
        <end position="51"/>
    </location>
</feature>
<feature type="helix" evidence="48">
    <location>
        <begin position="55"/>
        <end position="59"/>
    </location>
</feature>
<feature type="strand" evidence="48">
    <location>
        <begin position="61"/>
        <end position="69"/>
    </location>
</feature>
<feature type="helix" evidence="48">
    <location>
        <begin position="70"/>
        <end position="76"/>
    </location>
</feature>
<feature type="strand" evidence="48">
    <location>
        <begin position="81"/>
        <end position="86"/>
    </location>
</feature>
<feature type="turn" evidence="48">
    <location>
        <begin position="89"/>
        <end position="91"/>
    </location>
</feature>
<feature type="helix" evidence="48">
    <location>
        <begin position="103"/>
        <end position="106"/>
    </location>
</feature>
<feature type="helix" evidence="48">
    <location>
        <begin position="115"/>
        <end position="138"/>
    </location>
</feature>
<feature type="helix" evidence="48">
    <location>
        <begin position="143"/>
        <end position="146"/>
    </location>
</feature>
<feature type="helix" evidence="48">
    <location>
        <begin position="147"/>
        <end position="149"/>
    </location>
</feature>
<feature type="strand" evidence="48">
    <location>
        <begin position="154"/>
        <end position="163"/>
    </location>
</feature>
<feature type="helix" evidence="48">
    <location>
        <begin position="164"/>
        <end position="174"/>
    </location>
</feature>
<feature type="helix" evidence="48">
    <location>
        <begin position="181"/>
        <end position="197"/>
    </location>
</feature>
<feature type="helix" evidence="48">
    <location>
        <begin position="199"/>
        <end position="208"/>
    </location>
</feature>
<feature type="helix" evidence="47">
    <location>
        <begin position="214"/>
        <end position="216"/>
    </location>
</feature>
<keyword id="KW-0002">3D-structure</keyword>
<keyword id="KW-0274">FAD</keyword>
<keyword id="KW-0285">Flavoprotein</keyword>
<keyword id="KW-0489">Methyltransferase</keyword>
<keyword id="KW-0520">NAD</keyword>
<keyword id="KW-0521">NADP</keyword>
<keyword id="KW-0545">Nucleotide biosynthesis</keyword>
<keyword id="KW-1185">Reference proteome</keyword>
<keyword id="KW-0808">Transferase</keyword>
<protein>
    <recommendedName>
        <fullName evidence="12 13 14 15">Flavin-dependent thymidylate synthase</fullName>
        <shortName evidence="12 13 14 15">FDTS</shortName>
        <ecNumber evidence="4 5">2.1.1.148</ecNumber>
    </recommendedName>
    <alternativeName>
        <fullName evidence="1">FAD-dependent thymidylate synthase</fullName>
    </alternativeName>
    <alternativeName>
        <fullName evidence="1">Thymidylate synthase ThyX</fullName>
        <shortName evidence="1">TS</shortName>
        <shortName evidence="1">TSase</shortName>
    </alternativeName>
</protein>
<accession>Q9WYT0</accession>
<reference key="1">
    <citation type="journal article" date="1999" name="Nature">
        <title>Evidence for lateral gene transfer between Archaea and Bacteria from genome sequence of Thermotoga maritima.</title>
        <authorList>
            <person name="Nelson K.E."/>
            <person name="Clayton R.A."/>
            <person name="Gill S.R."/>
            <person name="Gwinn M.L."/>
            <person name="Dodson R.J."/>
            <person name="Haft D.H."/>
            <person name="Hickey E.K."/>
            <person name="Peterson J.D."/>
            <person name="Nelson W.C."/>
            <person name="Ketchum K.A."/>
            <person name="McDonald L.A."/>
            <person name="Utterback T.R."/>
            <person name="Malek J.A."/>
            <person name="Linher K.D."/>
            <person name="Garrett M.M."/>
            <person name="Stewart A.M."/>
            <person name="Cotton M.D."/>
            <person name="Pratt M.S."/>
            <person name="Phillips C.A."/>
            <person name="Richardson D.L."/>
            <person name="Heidelberg J.F."/>
            <person name="Sutton G.G."/>
            <person name="Fleischmann R.D."/>
            <person name="Eisen J.A."/>
            <person name="White O."/>
            <person name="Salzberg S.L."/>
            <person name="Smith H.O."/>
            <person name="Venter J.C."/>
            <person name="Fraser C.M."/>
        </authorList>
    </citation>
    <scope>NUCLEOTIDE SEQUENCE [LARGE SCALE GENOMIC DNA]</scope>
    <source>
        <strain>ATCC 43589 / DSM 3109 / JCM 10099 / NBRC 100826 / MSB8</strain>
    </source>
</reference>
<reference key="2">
    <citation type="journal article" date="2002" name="Proteins">
        <title>Crystal structure of thy1, a thymidylate synthase complementing protein from Thermotoga maritima at 2.25 A resolution.</title>
        <authorList>
            <person name="Kuhn P."/>
            <person name="Lesley S.A."/>
            <person name="Mathews I.I."/>
            <person name="Canaves J.M."/>
            <person name="Brinen L.S."/>
            <person name="Dai X."/>
            <person name="Deacon A.M."/>
            <person name="Elsliger M.-A."/>
            <person name="Eshaghi S."/>
            <person name="Floyd R."/>
            <person name="Godzik A."/>
            <person name="Grittini C."/>
            <person name="Grzechnik S.K."/>
            <person name="Guda C."/>
            <person name="Hodgson K.O."/>
            <person name="Jaroszewski L."/>
            <person name="Karlak C."/>
            <person name="Klock H.E."/>
            <person name="Koesema E."/>
            <person name="Kovarik J.M."/>
            <person name="Kreusch A.T."/>
            <person name="McMullan D."/>
            <person name="McPhillips T.M."/>
            <person name="Miller M.A."/>
            <person name="Miller M."/>
            <person name="Morse A."/>
            <person name="Moy K."/>
            <person name="Ouyang J."/>
            <person name="Robb A."/>
            <person name="Rodrigues K."/>
            <person name="Selby T.L."/>
            <person name="Spraggon G."/>
            <person name="Stevens R.C."/>
            <person name="Taylor S.S."/>
            <person name="van den Bedem H."/>
            <person name="Velasquez J."/>
            <person name="Vincent J."/>
            <person name="Wang X."/>
            <person name="West B."/>
            <person name="Wolf G."/>
            <person name="Wooley J."/>
            <person name="Wilson I.A."/>
        </authorList>
    </citation>
    <scope>X-RAY CRYSTALLOGRAPHY (2.25 ANGSTROMS) IN COMPLEX WITH FAD</scope>
    <scope>COFACTOR</scope>
    <scope>SUBUNIT</scope>
    <source>
        <strain>ATCC 43589 / DSM 3109 / JCM 10099 / NBRC 100826 / MSB8</strain>
    </source>
</reference>
<reference evidence="18 19 20 21 22 23 24 25" key="3">
    <citation type="journal article" date="2003" name="Structure">
        <title>Functional analysis of substrate and cofactor complex structures of a thymidylate synthase-complementing protein.</title>
        <authorList>
            <person name="Mathews I.I."/>
            <person name="Deacon A.M."/>
            <person name="Canaves J.M."/>
            <person name="McMullan D."/>
            <person name="Lesley S.A."/>
            <person name="Agarwalla S."/>
            <person name="Kuhn P."/>
        </authorList>
    </citation>
    <scope>X-RAY CRYSTALLOGRAPHY (1.60 ANGSTROMS) OF APOENZYME AND COMPLEXES WITH FAD; DUMP AND SUBSTRATE ANALOGS</scope>
    <scope>FUNCTION</scope>
    <scope>CATALYTIC ACTIVITY</scope>
    <scope>COFACTOR</scope>
    <scope>SUBUNIT</scope>
    <source>
        <strain>ATCC 43589 / DSM 3109 / JCM 10099 / NBRC 100826 / MSB8</strain>
    </source>
</reference>
<reference evidence="26 27" key="4">
    <citation type="journal article" date="2009" name="Nature">
        <title>An unusual mechanism of thymidylate biosynthesis in organisms containing the thyX gene.</title>
        <authorList>
            <person name="Koehn E.M."/>
            <person name="Fleischmann T."/>
            <person name="Conrad J.A."/>
            <person name="Palfey B.A."/>
            <person name="Lesley S.A."/>
            <person name="Mathews I.I."/>
            <person name="Kohen A."/>
        </authorList>
    </citation>
    <scope>X-RAY CRYSTALLOGRAPHY (1.95 ANGSTROMS) OF MUTANTS ALA-88 AND CYS-88 IN COMPLEX WITH FAD AND DUMP</scope>
    <scope>FUNCTION</scope>
    <scope>CATALYTIC ACTIVITY</scope>
    <scope>BIOPHYSICOCHEMICAL PROPERTIES</scope>
    <scope>REACTION MECHANISM</scope>
    <scope>MUTAGENESIS OF SER-88</scope>
</reference>
<reference evidence="28 29" key="5">
    <citation type="journal article" date="2010" name="J. Appl. Crystallogr.">
        <title>Diffraction study of protein crystals grown in cryoloops and micromounts.</title>
        <authorList>
            <person name="Berger M.A."/>
            <person name="Decker J.H."/>
            <person name="Mathews I.I."/>
        </authorList>
    </citation>
    <scope>X-RAY CRYSTALLOGRAPHY (2.30 ANGSTROMS) IN COMPLEX WITH FAD AND DUMP</scope>
</reference>
<reference evidence="30 31 32 33 34 35 36 37" key="6">
    <citation type="journal article" date="2012" name="Proc. Natl. Acad. Sci. U.S.A.">
        <title>Folate binding site of flavin-dependent thymidylate synthase.</title>
        <authorList>
            <person name="Koehn E.M."/>
            <person name="Perissinotti L.L."/>
            <person name="Moghram S."/>
            <person name="Prabhakar A."/>
            <person name="Lesley S.A."/>
            <person name="Mathews I.I."/>
            <person name="Kohen A."/>
        </authorList>
    </citation>
    <scope>X-RAY CRYSTALLOGRAPHY (1.39 ANGSTROMS) OF WILD-TYPE AND MUTANTS ALA-53; ARG-144 AND LYS-174 IN COMPLEXES WITH FAD; DUMP AND SEVERAL FOLATE DERIVATIVES</scope>
    <scope>REACTION MECHANISM</scope>
    <scope>MUTAGENESIS OF HIS-53; GLU-144 AND ARG-174</scope>
</reference>
<reference evidence="38 39 40" key="7">
    <citation type="journal article" date="2013" name="J. Bioterror. Biodef.">
        <title>Flavin-dependent thymidylate synthase as a drug target for deadly microbes: mutational study and a strategy for inhibitor design.</title>
        <authorList>
            <person name="Mathews I.I."/>
        </authorList>
    </citation>
    <scope>X-RAY CRYSTALLOGRAPHY (1.85 ANGSTROMS) OF MUTANT ASP-53 IN COMPLEXES WITH FAD; FADH2 AND DUMP</scope>
    <scope>SUBUNIT</scope>
</reference>
<reference evidence="41 42 43 44" key="8">
    <citation type="journal article" date="2016" name="Biochemistry">
        <title>Deprotonations in the reaction of flavin-dependent thymidylate synthase.</title>
        <authorList>
            <person name="Stull F.W."/>
            <person name="Bernard S.M."/>
            <person name="Sapra A."/>
            <person name="Smith J.L."/>
            <person name="Zuiderweg E.R."/>
            <person name="Palfey B.A."/>
        </authorList>
    </citation>
    <scope>X-RAY CRYSTALLOGRAPHY (1.90 ANGSTROMS) OF WILD-TYPE AND MUTANTS ALA-90 AND ALA-174 IN COMPLEXES WITH FAD; DUMP AND DEOXYURIDINE</scope>
    <scope>REACTION MECHANISM</scope>
    <scope>ACTIVE SITE</scope>
    <scope>MUTAGENESIS OF ARG-90 AND ARG-174</scope>
</reference>
<reference evidence="45 46" key="9">
    <citation type="journal article" date="2021" name="Nat. Commun.">
        <title>An enzymatic activation of formaldehyde for nucleotide methylation.</title>
        <authorList>
            <person name="Bou-Nader C."/>
            <person name="Stull F.W."/>
            <person name="Pecqueur L."/>
            <person name="Simon P."/>
            <person name="Guerineau V."/>
            <person name="Royant A."/>
            <person name="Fontecave M."/>
            <person name="Lombard M."/>
            <person name="Palfey B.A."/>
            <person name="Hamdane D."/>
        </authorList>
    </citation>
    <scope>X-RAY CRYSTALLOGRAPHY (2.00 ANGSTROMS) IN COMPLEXES WITH A FLAVIN CARBINOLAMINE AND FAD</scope>
    <scope>FUNCTION</scope>
    <scope>CATALYTIC ACTIVITY</scope>
    <scope>REACTION MECHANISM</scope>
</reference>